<organism>
    <name type="scientific">Xenopus laevis</name>
    <name type="common">African clawed frog</name>
    <dbReference type="NCBI Taxonomy" id="8355"/>
    <lineage>
        <taxon>Eukaryota</taxon>
        <taxon>Metazoa</taxon>
        <taxon>Chordata</taxon>
        <taxon>Craniata</taxon>
        <taxon>Vertebrata</taxon>
        <taxon>Euteleostomi</taxon>
        <taxon>Amphibia</taxon>
        <taxon>Batrachia</taxon>
        <taxon>Anura</taxon>
        <taxon>Pipoidea</taxon>
        <taxon>Pipidae</taxon>
        <taxon>Xenopodinae</taxon>
        <taxon>Xenopus</taxon>
        <taxon>Xenopus</taxon>
    </lineage>
</organism>
<gene>
    <name type="primary">ccdc176</name>
    <name type="synonym">bbof1</name>
</gene>
<protein>
    <recommendedName>
        <fullName>Basal body-orientation factor 1</fullName>
    </recommendedName>
    <alternativeName>
        <fullName>Coiled-coil domain-containing protein 176</fullName>
    </alternativeName>
</protein>
<evidence type="ECO:0000255" key="1"/>
<evidence type="ECO:0000256" key="2">
    <source>
        <dbReference type="SAM" id="MobiDB-lite"/>
    </source>
</evidence>
<evidence type="ECO:0000269" key="3">
    <source>
    </source>
</evidence>
<evidence type="ECO:0000305" key="4"/>
<sequence length="531" mass="62167">MPKLKVKAGKGKKGKRKKAGKNEHRLDKESEVERARSNAALWEARLKVTEFSRVEYRDAARSLAQNNEDLTKQQYKLEKDMVEVIGFLKKQDLEKDELIEKLQQNLIAQKKSAQDEREKLVELYSKQIAHLEENYSQKTNEMQIIQSEFKLMREFRRQKVELEKELDEVKESLWRANQDHKETLARMERRFFEEKQRLEKEAEKKIMMLAEKAHSEAIIQLDEARKSVFKENVRLKEAFSYHLKEMKDIKKSKKMQEDAKLHLLQEKETNDLLVQEKVSQVSQKKVQIQELQQNVKALECALERMTMEMEKDAQGKEHQALLQEQAGNVELQKLQKVLHMKEREMNRIKKLARNILEERTEVESFFLEALWQVKQEIATSRNYYRQVAQSAYTSKMIQASLGKDQYPKIRTFHNKEHSTNDVSHDLSEAEKWTHIQAGKVDIGDLTWEQKEKVLRLLFAKMNGFQSRKSPGLKPSPPADVSSIKEKEINTSNLEEKPEESSSTFITQSIPELPAPSLVLPHIQTGRCQVTG</sequence>
<comment type="function">
    <text evidence="3">Basal body protein required in multiciliate cells to align and maintain cilia orientation in response to flow. May act by mediating a maturation step that stabilizes and aligns cilia orientation. Not required to respond to planar cell polarity (PCP) or flow-based orientation cues.</text>
</comment>
<comment type="subcellular location">
    <subcellularLocation>
        <location evidence="3">Cytoplasm</location>
        <location evidence="3">Cytoskeleton</location>
        <location evidence="3">Cilium basal body</location>
    </subcellularLocation>
    <text>Localizes to a polar structure adjacent to the basal body.</text>
</comment>
<comment type="tissue specificity">
    <text evidence="3">Multiciliated cells.</text>
</comment>
<comment type="induction">
    <text evidence="3">Up-regulated by foxj1 during motile cilia formation.</text>
</comment>
<comment type="disruption phenotype">
    <text evidence="3">Cilia in multiciliate cells are motile but fail to produce flow. Multiciliated cells are present in the normal number, cilia of normal length and of normal density. They are however misoriented.</text>
</comment>
<comment type="similarity">
    <text evidence="4">Belongs to the BBOF1 family.</text>
</comment>
<proteinExistence type="evidence at transcript level"/>
<name>BBOF1_XENLA</name>
<accession>A0JMY4</accession>
<dbReference type="EMBL" id="BC126050">
    <property type="protein sequence ID" value="AAI26051.1"/>
    <property type="molecule type" value="mRNA"/>
</dbReference>
<dbReference type="RefSeq" id="NP_001090552.1">
    <property type="nucleotide sequence ID" value="NM_001097083.1"/>
</dbReference>
<dbReference type="SMR" id="A0JMY4"/>
<dbReference type="DNASU" id="100036788"/>
<dbReference type="GeneID" id="100036788"/>
<dbReference type="KEGG" id="xla:100036788"/>
<dbReference type="AGR" id="Xenbase:XB-GENE-5831975"/>
<dbReference type="CTD" id="100036788"/>
<dbReference type="Xenbase" id="XB-GENE-5831975">
    <property type="gene designation" value="bbof1.L"/>
</dbReference>
<dbReference type="OrthoDB" id="441129at2759"/>
<dbReference type="Proteomes" id="UP000186698">
    <property type="component" value="Chromosome 8L"/>
</dbReference>
<dbReference type="Bgee" id="100036788">
    <property type="expression patterns" value="Expressed in internal ear and 10 other cell types or tissues"/>
</dbReference>
<dbReference type="GO" id="GO:0036064">
    <property type="term" value="C:ciliary basal body"/>
    <property type="evidence" value="ECO:0000314"/>
    <property type="project" value="UniProtKB"/>
</dbReference>
<dbReference type="GO" id="GO:0005737">
    <property type="term" value="C:cytoplasm"/>
    <property type="evidence" value="ECO:0007669"/>
    <property type="project" value="UniProtKB-KW"/>
</dbReference>
<dbReference type="GO" id="GO:0044458">
    <property type="term" value="P:motile cilium assembly"/>
    <property type="evidence" value="ECO:0000315"/>
    <property type="project" value="UniProtKB"/>
</dbReference>
<dbReference type="InterPro" id="IPR032777">
    <property type="entry name" value="DUF4515"/>
</dbReference>
<dbReference type="PANTHER" id="PTHR14845:SF5">
    <property type="entry name" value="BASAL BODY-ORIENTATION FACTOR 1"/>
    <property type="match status" value="1"/>
</dbReference>
<dbReference type="PANTHER" id="PTHR14845">
    <property type="entry name" value="COILED-COIL DOMAIN-CONTAINING 166"/>
    <property type="match status" value="1"/>
</dbReference>
<dbReference type="Pfam" id="PF14988">
    <property type="entry name" value="DUF4515"/>
    <property type="match status" value="1"/>
</dbReference>
<reference key="1">
    <citation type="submission" date="2006-10" db="EMBL/GenBank/DDBJ databases">
        <authorList>
            <consortium name="NIH - Xenopus Gene Collection (XGC) project"/>
        </authorList>
    </citation>
    <scope>NUCLEOTIDE SEQUENCE [LARGE SCALE MRNA]</scope>
    <source>
        <tissue>Eye</tissue>
    </source>
</reference>
<reference key="2">
    <citation type="journal article" date="2013" name="Development">
        <title>Bbof1 is required to maintain cilia orientation.</title>
        <authorList>
            <person name="Chien Y.H."/>
            <person name="Werner M.E."/>
            <person name="Stubbs J."/>
            <person name="Joens M.S."/>
            <person name="Li J."/>
            <person name="Chien S."/>
            <person name="Fitzpatrick J.A."/>
            <person name="Mitchell B.J."/>
            <person name="Kintner C."/>
        </authorList>
    </citation>
    <scope>FUNCTION</scope>
    <scope>SUBCELLULAR LOCATION</scope>
    <scope>TISSUE SPECIFICITY</scope>
    <scope>INDUCTION</scope>
    <scope>DISRUPTION PHENOTYPE</scope>
</reference>
<feature type="chain" id="PRO_0000281127" description="Basal body-orientation factor 1">
    <location>
        <begin position="1"/>
        <end position="531"/>
    </location>
</feature>
<feature type="region of interest" description="Disordered" evidence="2">
    <location>
        <begin position="1"/>
        <end position="32"/>
    </location>
</feature>
<feature type="region of interest" description="Disordered" evidence="2">
    <location>
        <begin position="465"/>
        <end position="505"/>
    </location>
</feature>
<feature type="coiled-coil region" evidence="1">
    <location>
        <begin position="26"/>
        <end position="213"/>
    </location>
</feature>
<feature type="coiled-coil region" evidence="1">
    <location>
        <begin position="274"/>
        <end position="365"/>
    </location>
</feature>
<feature type="compositionally biased region" description="Basic residues" evidence="2">
    <location>
        <begin position="1"/>
        <end position="19"/>
    </location>
</feature>
<feature type="compositionally biased region" description="Basic and acidic residues" evidence="2">
    <location>
        <begin position="20"/>
        <end position="32"/>
    </location>
</feature>
<feature type="compositionally biased region" description="Basic and acidic residues" evidence="2">
    <location>
        <begin position="482"/>
        <end position="499"/>
    </location>
</feature>
<keyword id="KW-0966">Cell projection</keyword>
<keyword id="KW-0969">Cilium</keyword>
<keyword id="KW-0175">Coiled coil</keyword>
<keyword id="KW-0963">Cytoplasm</keyword>
<keyword id="KW-0206">Cytoskeleton</keyword>
<keyword id="KW-1185">Reference proteome</keyword>